<dbReference type="EC" id="3.1.4.11" evidence="4"/>
<dbReference type="EMBL" id="U85712">
    <property type="protein sequence ID" value="AAD00571.1"/>
    <property type="molecule type" value="mRNA"/>
</dbReference>
<dbReference type="EMBL" id="U85713">
    <property type="protein sequence ID" value="AAD00572.1"/>
    <property type="molecule type" value="mRNA"/>
</dbReference>
<dbReference type="EMBL" id="U85714">
    <property type="protein sequence ID" value="AAD00573.1"/>
    <property type="molecule type" value="mRNA"/>
</dbReference>
<dbReference type="EMBL" id="AF498249">
    <property type="protein sequence ID" value="AAM22966.1"/>
    <property type="molecule type" value="mRNA"/>
</dbReference>
<dbReference type="EMBL" id="AF498250">
    <property type="protein sequence ID" value="AAM22967.1"/>
    <property type="molecule type" value="mRNA"/>
</dbReference>
<dbReference type="EMBL" id="AL840635">
    <property type="status" value="NOT_ANNOTATED_CDS"/>
    <property type="molecule type" value="Genomic_DNA"/>
</dbReference>
<dbReference type="EMBL" id="AL928635">
    <property type="status" value="NOT_ANNOTATED_CDS"/>
    <property type="molecule type" value="Genomic_DNA"/>
</dbReference>
<dbReference type="EMBL" id="AL928956">
    <property type="status" value="NOT_ANNOTATED_CDS"/>
    <property type="molecule type" value="Genomic_DNA"/>
</dbReference>
<dbReference type="EMBL" id="AL935278">
    <property type="status" value="NOT_ANNOTATED_CDS"/>
    <property type="molecule type" value="Genomic_DNA"/>
</dbReference>
<dbReference type="EMBL" id="BC058710">
    <property type="protein sequence ID" value="AAH58710.1"/>
    <property type="molecule type" value="mRNA"/>
</dbReference>
<dbReference type="EMBL" id="AF022801">
    <property type="protein sequence ID" value="AAD01749.1"/>
    <property type="molecule type" value="mRNA"/>
</dbReference>
<dbReference type="EMBL" id="X95344">
    <property type="protein sequence ID" value="CAA64637.1"/>
    <property type="molecule type" value="mRNA"/>
</dbReference>
<dbReference type="CCDS" id="CCDS16787.1">
    <molecule id="Q9Z1B3-2"/>
</dbReference>
<dbReference type="CCDS" id="CCDS50729.1">
    <molecule id="Q9Z1B3-1"/>
</dbReference>
<dbReference type="PIR" id="S68256">
    <property type="entry name" value="S68256"/>
</dbReference>
<dbReference type="RefSeq" id="NP_001139302.1">
    <molecule id="Q9Z1B3-1"/>
    <property type="nucleotide sequence ID" value="NM_001145830.1"/>
</dbReference>
<dbReference type="RefSeq" id="NP_062651.2">
    <molecule id="Q9Z1B3-2"/>
    <property type="nucleotide sequence ID" value="NM_019677.2"/>
</dbReference>
<dbReference type="SMR" id="Q9Z1B3"/>
<dbReference type="BioGRID" id="202232">
    <property type="interactions" value="12"/>
</dbReference>
<dbReference type="FunCoup" id="Q9Z1B3">
    <property type="interactions" value="2323"/>
</dbReference>
<dbReference type="IntAct" id="Q9Z1B3">
    <property type="interactions" value="5"/>
</dbReference>
<dbReference type="MINT" id="Q9Z1B3"/>
<dbReference type="STRING" id="10090.ENSMUSP00000105743"/>
<dbReference type="GlyGen" id="Q9Z1B3">
    <property type="glycosylation" value="1 site, 1 O-linked glycan (1 site)"/>
</dbReference>
<dbReference type="iPTMnet" id="Q9Z1B3"/>
<dbReference type="PhosphoSitePlus" id="Q9Z1B3"/>
<dbReference type="SwissPalm" id="Q9Z1B3"/>
<dbReference type="PaxDb" id="10090-ENSMUSP00000105743"/>
<dbReference type="PeptideAtlas" id="Q9Z1B3"/>
<dbReference type="ProteomicsDB" id="289918">
    <molecule id="Q9Z1B3-1"/>
</dbReference>
<dbReference type="ProteomicsDB" id="289919">
    <molecule id="Q9Z1B3-2"/>
</dbReference>
<dbReference type="ProteomicsDB" id="289920">
    <molecule id="Q9Z1B3-3"/>
</dbReference>
<dbReference type="Pumba" id="Q9Z1B3"/>
<dbReference type="Antibodypedia" id="3795">
    <property type="antibodies" value="269 antibodies from 36 providers"/>
</dbReference>
<dbReference type="DNASU" id="18795"/>
<dbReference type="Ensembl" id="ENSMUST00000070724.12">
    <molecule id="Q9Z1B3-2"/>
    <property type="protein sequence ID" value="ENSMUSP00000064844.6"/>
    <property type="gene ID" value="ENSMUSG00000051177.17"/>
</dbReference>
<dbReference type="Ensembl" id="ENSMUST00000110116.8">
    <molecule id="Q9Z1B3-1"/>
    <property type="protein sequence ID" value="ENSMUSP00000105743.2"/>
    <property type="gene ID" value="ENSMUSG00000051177.17"/>
</dbReference>
<dbReference type="Ensembl" id="ENSMUST00000131552.5">
    <molecule id="Q9Z1B3-2"/>
    <property type="protein sequence ID" value="ENSMUSP00000118756.3"/>
    <property type="gene ID" value="ENSMUSG00000051177.17"/>
</dbReference>
<dbReference type="GeneID" id="18795"/>
<dbReference type="KEGG" id="mmu:18795"/>
<dbReference type="UCSC" id="uc008mnx.2">
    <molecule id="Q9Z1B3-2"/>
    <property type="organism name" value="mouse"/>
</dbReference>
<dbReference type="UCSC" id="uc008mny.2">
    <molecule id="Q9Z1B3-1"/>
    <property type="organism name" value="mouse"/>
</dbReference>
<dbReference type="AGR" id="MGI:97613"/>
<dbReference type="CTD" id="23236"/>
<dbReference type="MGI" id="MGI:97613">
    <property type="gene designation" value="Plcb1"/>
</dbReference>
<dbReference type="VEuPathDB" id="HostDB:ENSMUSG00000051177"/>
<dbReference type="eggNOG" id="KOG1265">
    <property type="taxonomic scope" value="Eukaryota"/>
</dbReference>
<dbReference type="GeneTree" id="ENSGT00940000155428"/>
<dbReference type="InParanoid" id="Q9Z1B3"/>
<dbReference type="OMA" id="PIVFKKX"/>
<dbReference type="OrthoDB" id="269822at2759"/>
<dbReference type="PhylomeDB" id="Q9Z1B3"/>
<dbReference type="TreeFam" id="TF313216"/>
<dbReference type="BRENDA" id="3.1.4.11">
    <property type="organism ID" value="3474"/>
</dbReference>
<dbReference type="Reactome" id="R-MMU-112043">
    <property type="pathway name" value="PLC beta mediated events"/>
</dbReference>
<dbReference type="Reactome" id="R-MMU-1855204">
    <property type="pathway name" value="Synthesis of IP3 and IP4 in the cytosol"/>
</dbReference>
<dbReference type="Reactome" id="R-MMU-399997">
    <property type="pathway name" value="Acetylcholine regulates insulin secretion"/>
</dbReference>
<dbReference type="Reactome" id="R-MMU-4086398">
    <property type="pathway name" value="Ca2+ pathway"/>
</dbReference>
<dbReference type="Reactome" id="R-MMU-416476">
    <property type="pathway name" value="G alpha (q) signalling events"/>
</dbReference>
<dbReference type="Reactome" id="R-MMU-418217">
    <property type="pathway name" value="G beta:gamma signalling through PLC beta"/>
</dbReference>
<dbReference type="Reactome" id="R-MMU-434316">
    <property type="pathway name" value="Fatty Acids bound to GPR40 (FFAR1) regulate insulin secretion"/>
</dbReference>
<dbReference type="Reactome" id="R-MMU-500657">
    <property type="pathway name" value="Presynaptic function of Kainate receptors"/>
</dbReference>
<dbReference type="BioGRID-ORCS" id="18795">
    <property type="hits" value="3 hits in 79 CRISPR screens"/>
</dbReference>
<dbReference type="CD-CODE" id="CE726F99">
    <property type="entry name" value="Postsynaptic density"/>
</dbReference>
<dbReference type="ChiTaRS" id="Plcb1">
    <property type="organism name" value="mouse"/>
</dbReference>
<dbReference type="PRO" id="PR:Q9Z1B3"/>
<dbReference type="Proteomes" id="UP000000589">
    <property type="component" value="Chromosome 2"/>
</dbReference>
<dbReference type="RNAct" id="Q9Z1B3">
    <property type="molecule type" value="protein"/>
</dbReference>
<dbReference type="Bgee" id="ENSMUSG00000051177">
    <property type="expression patterns" value="Expressed in caudate-putamen and 241 other cell types or tissues"/>
</dbReference>
<dbReference type="ExpressionAtlas" id="Q9Z1B3">
    <property type="expression patterns" value="baseline and differential"/>
</dbReference>
<dbReference type="GO" id="GO:0000785">
    <property type="term" value="C:chromatin"/>
    <property type="evidence" value="ECO:0000314"/>
    <property type="project" value="BHF-UCL"/>
</dbReference>
<dbReference type="GO" id="GO:0005737">
    <property type="term" value="C:cytoplasm"/>
    <property type="evidence" value="ECO:0000314"/>
    <property type="project" value="BHF-UCL"/>
</dbReference>
<dbReference type="GO" id="GO:0098982">
    <property type="term" value="C:GABA-ergic synapse"/>
    <property type="evidence" value="ECO:0000314"/>
    <property type="project" value="SynGO"/>
</dbReference>
<dbReference type="GO" id="GO:0098978">
    <property type="term" value="C:glutamatergic synapse"/>
    <property type="evidence" value="ECO:0000314"/>
    <property type="project" value="SynGO"/>
</dbReference>
<dbReference type="GO" id="GO:0043209">
    <property type="term" value="C:myelin sheath"/>
    <property type="evidence" value="ECO:0007005"/>
    <property type="project" value="UniProtKB"/>
</dbReference>
<dbReference type="GO" id="GO:0031965">
    <property type="term" value="C:nuclear membrane"/>
    <property type="evidence" value="ECO:0007669"/>
    <property type="project" value="UniProtKB-SubCell"/>
</dbReference>
<dbReference type="GO" id="GO:0016607">
    <property type="term" value="C:nuclear speck"/>
    <property type="evidence" value="ECO:0000314"/>
    <property type="project" value="BHF-UCL"/>
</dbReference>
<dbReference type="GO" id="GO:0005634">
    <property type="term" value="C:nucleus"/>
    <property type="evidence" value="ECO:0000314"/>
    <property type="project" value="BHF-UCL"/>
</dbReference>
<dbReference type="GO" id="GO:0005886">
    <property type="term" value="C:plasma membrane"/>
    <property type="evidence" value="ECO:0000266"/>
    <property type="project" value="MGI"/>
</dbReference>
<dbReference type="GO" id="GO:0099524">
    <property type="term" value="C:postsynaptic cytosol"/>
    <property type="evidence" value="ECO:0000314"/>
    <property type="project" value="SynGO"/>
</dbReference>
<dbReference type="GO" id="GO:0032991">
    <property type="term" value="C:protein-containing complex"/>
    <property type="evidence" value="ECO:0000314"/>
    <property type="project" value="MGI"/>
</dbReference>
<dbReference type="GO" id="GO:0005509">
    <property type="term" value="F:calcium ion binding"/>
    <property type="evidence" value="ECO:0007669"/>
    <property type="project" value="Ensembl"/>
</dbReference>
<dbReference type="GO" id="GO:0005516">
    <property type="term" value="F:calmodulin binding"/>
    <property type="evidence" value="ECO:0000250"/>
    <property type="project" value="BHF-UCL"/>
</dbReference>
<dbReference type="GO" id="GO:0019899">
    <property type="term" value="F:enzyme binding"/>
    <property type="evidence" value="ECO:0000250"/>
    <property type="project" value="BHF-UCL"/>
</dbReference>
<dbReference type="GO" id="GO:0005096">
    <property type="term" value="F:GTPase activator activity"/>
    <property type="evidence" value="ECO:0007669"/>
    <property type="project" value="Ensembl"/>
</dbReference>
<dbReference type="GO" id="GO:0042802">
    <property type="term" value="F:identical protein binding"/>
    <property type="evidence" value="ECO:0000250"/>
    <property type="project" value="BHF-UCL"/>
</dbReference>
<dbReference type="GO" id="GO:0005521">
    <property type="term" value="F:lamin binding"/>
    <property type="evidence" value="ECO:0000353"/>
    <property type="project" value="BHF-UCL"/>
</dbReference>
<dbReference type="GO" id="GO:0005546">
    <property type="term" value="F:phosphatidylinositol-4,5-bisphosphate binding"/>
    <property type="evidence" value="ECO:0000250"/>
    <property type="project" value="BHF-UCL"/>
</dbReference>
<dbReference type="GO" id="GO:0004435">
    <property type="term" value="F:phosphatidylinositol-4,5-bisphosphate phospholipase C activity"/>
    <property type="evidence" value="ECO:0000314"/>
    <property type="project" value="BHF-UCL"/>
</dbReference>
<dbReference type="GO" id="GO:0060466">
    <property type="term" value="P:activation of meiosis involved in egg activation"/>
    <property type="evidence" value="ECO:0000314"/>
    <property type="project" value="BHF-UCL"/>
</dbReference>
<dbReference type="GO" id="GO:0007420">
    <property type="term" value="P:brain development"/>
    <property type="evidence" value="ECO:0000303"/>
    <property type="project" value="BHF-UCL"/>
</dbReference>
<dbReference type="GO" id="GO:0007155">
    <property type="term" value="P:cell adhesion"/>
    <property type="evidence" value="ECO:0000305"/>
    <property type="project" value="BHF-UCL"/>
</dbReference>
<dbReference type="GO" id="GO:1902618">
    <property type="term" value="P:cellular response to fluoride"/>
    <property type="evidence" value="ECO:0007669"/>
    <property type="project" value="Ensembl"/>
</dbReference>
<dbReference type="GO" id="GO:1905631">
    <property type="term" value="P:cellular response to glyceraldehyde"/>
    <property type="evidence" value="ECO:0007669"/>
    <property type="project" value="Ensembl"/>
</dbReference>
<dbReference type="GO" id="GO:1904637">
    <property type="term" value="P:cellular response to ionomycin"/>
    <property type="evidence" value="ECO:0007669"/>
    <property type="project" value="Ensembl"/>
</dbReference>
<dbReference type="GO" id="GO:1904117">
    <property type="term" value="P:cellular response to vasopressin"/>
    <property type="evidence" value="ECO:0007669"/>
    <property type="project" value="Ensembl"/>
</dbReference>
<dbReference type="GO" id="GO:0021987">
    <property type="term" value="P:cerebral cortex development"/>
    <property type="evidence" value="ECO:0000315"/>
    <property type="project" value="BHF-UCL"/>
</dbReference>
<dbReference type="GO" id="GO:0030218">
    <property type="term" value="P:erythrocyte differentiation"/>
    <property type="evidence" value="ECO:0000304"/>
    <property type="project" value="BHF-UCL"/>
</dbReference>
<dbReference type="GO" id="GO:0045444">
    <property type="term" value="P:fat cell differentiation"/>
    <property type="evidence" value="ECO:0000314"/>
    <property type="project" value="BHF-UCL"/>
</dbReference>
<dbReference type="GO" id="GO:0007213">
    <property type="term" value="P:G protein-coupled acetylcholine receptor signaling pathway"/>
    <property type="evidence" value="ECO:0000315"/>
    <property type="project" value="BHF-UCL"/>
</dbReference>
<dbReference type="GO" id="GO:0000086">
    <property type="term" value="P:G2/M transition of mitotic cell cycle"/>
    <property type="evidence" value="ECO:0000314"/>
    <property type="project" value="BHF-UCL"/>
</dbReference>
<dbReference type="GO" id="GO:0007215">
    <property type="term" value="P:glutamate receptor signaling pathway"/>
    <property type="evidence" value="ECO:0000315"/>
    <property type="project" value="BHF-UCL"/>
</dbReference>
<dbReference type="GO" id="GO:0032957">
    <property type="term" value="P:inositol trisphosphate metabolic process"/>
    <property type="evidence" value="ECO:0007669"/>
    <property type="project" value="Ensembl"/>
</dbReference>
<dbReference type="GO" id="GO:0008286">
    <property type="term" value="P:insulin receptor signaling pathway"/>
    <property type="evidence" value="ECO:0000304"/>
    <property type="project" value="BHF-UCL"/>
</dbReference>
<dbReference type="GO" id="GO:0048009">
    <property type="term" value="P:insulin-like growth factor receptor signaling pathway"/>
    <property type="evidence" value="ECO:0000314"/>
    <property type="project" value="BHF-UCL"/>
</dbReference>
<dbReference type="GO" id="GO:0070498">
    <property type="term" value="P:interleukin-1-mediated signaling pathway"/>
    <property type="evidence" value="ECO:0007669"/>
    <property type="project" value="Ensembl"/>
</dbReference>
<dbReference type="GO" id="GO:0035722">
    <property type="term" value="P:interleukin-12-mediated signaling pathway"/>
    <property type="evidence" value="ECO:0000250"/>
    <property type="project" value="BHF-UCL"/>
</dbReference>
<dbReference type="GO" id="GO:0035723">
    <property type="term" value="P:interleukin-15-mediated signaling pathway"/>
    <property type="evidence" value="ECO:0000250"/>
    <property type="project" value="BHF-UCL"/>
</dbReference>
<dbReference type="GO" id="GO:0035556">
    <property type="term" value="P:intracellular signal transduction"/>
    <property type="evidence" value="ECO:0007669"/>
    <property type="project" value="InterPro"/>
</dbReference>
<dbReference type="GO" id="GO:0007612">
    <property type="term" value="P:learning"/>
    <property type="evidence" value="ECO:0007669"/>
    <property type="project" value="Ensembl"/>
</dbReference>
<dbReference type="GO" id="GO:1990806">
    <property type="term" value="P:ligand-gated ion channel signaling pathway"/>
    <property type="evidence" value="ECO:0000315"/>
    <property type="project" value="MGI"/>
</dbReference>
<dbReference type="GO" id="GO:0030225">
    <property type="term" value="P:macrophage differentiation"/>
    <property type="evidence" value="ECO:0000303"/>
    <property type="project" value="BHF-UCL"/>
</dbReference>
<dbReference type="GO" id="GO:0007613">
    <property type="term" value="P:memory"/>
    <property type="evidence" value="ECO:0000315"/>
    <property type="project" value="BHF-UCL"/>
</dbReference>
<dbReference type="GO" id="GO:0006397">
    <property type="term" value="P:mRNA processing"/>
    <property type="evidence" value="ECO:0000304"/>
    <property type="project" value="BHF-UCL"/>
</dbReference>
<dbReference type="GO" id="GO:0045892">
    <property type="term" value="P:negative regulation of DNA-templated transcription"/>
    <property type="evidence" value="ECO:0000314"/>
    <property type="project" value="BHF-UCL"/>
</dbReference>
<dbReference type="GO" id="GO:2000438">
    <property type="term" value="P:negative regulation of monocyte extravasation"/>
    <property type="evidence" value="ECO:0000314"/>
    <property type="project" value="BHF-UCL"/>
</dbReference>
<dbReference type="GO" id="GO:0001556">
    <property type="term" value="P:oocyte maturation"/>
    <property type="evidence" value="ECO:0000303"/>
    <property type="project" value="BHF-UCL"/>
</dbReference>
<dbReference type="GO" id="GO:0031161">
    <property type="term" value="P:phosphatidylinositol catabolic process"/>
    <property type="evidence" value="ECO:0007669"/>
    <property type="project" value="Ensembl"/>
</dbReference>
<dbReference type="GO" id="GO:0046488">
    <property type="term" value="P:phosphatidylinositol metabolic process"/>
    <property type="evidence" value="ECO:0000250"/>
    <property type="project" value="UniProtKB"/>
</dbReference>
<dbReference type="GO" id="GO:0071882">
    <property type="term" value="P:phospholipase C-activating adrenergic receptor signaling pathway"/>
    <property type="evidence" value="ECO:0000303"/>
    <property type="project" value="BHF-UCL"/>
</dbReference>
<dbReference type="GO" id="GO:0007207">
    <property type="term" value="P:phospholipase C-activating G protein-coupled acetylcholine receptor signaling pathway"/>
    <property type="evidence" value="ECO:0000315"/>
    <property type="project" value="MGI"/>
</dbReference>
<dbReference type="GO" id="GO:0007200">
    <property type="term" value="P:phospholipase C-activating G protein-coupled receptor signaling pathway"/>
    <property type="evidence" value="ECO:0000315"/>
    <property type="project" value="MGI"/>
</dbReference>
<dbReference type="GO" id="GO:2000344">
    <property type="term" value="P:positive regulation of acrosome reaction"/>
    <property type="evidence" value="ECO:0000315"/>
    <property type="project" value="BHF-UCL"/>
</dbReference>
<dbReference type="GO" id="GO:0048639">
    <property type="term" value="P:positive regulation of developmental growth"/>
    <property type="evidence" value="ECO:0000315"/>
    <property type="project" value="BHF-UCL"/>
</dbReference>
<dbReference type="GO" id="GO:0045893">
    <property type="term" value="P:positive regulation of DNA-templated transcription"/>
    <property type="evidence" value="ECO:0000314"/>
    <property type="project" value="BHF-UCL"/>
</dbReference>
<dbReference type="GO" id="GO:0040019">
    <property type="term" value="P:positive regulation of embryonic development"/>
    <property type="evidence" value="ECO:0000315"/>
    <property type="project" value="BHF-UCL"/>
</dbReference>
<dbReference type="GO" id="GO:1900087">
    <property type="term" value="P:positive regulation of G1/S transition of mitotic cell cycle"/>
    <property type="evidence" value="ECO:0000314"/>
    <property type="project" value="BHF-UCL"/>
</dbReference>
<dbReference type="GO" id="GO:0010560">
    <property type="term" value="P:positive regulation of glycoprotein biosynthetic process"/>
    <property type="evidence" value="ECO:0000314"/>
    <property type="project" value="BHF-UCL"/>
</dbReference>
<dbReference type="GO" id="GO:0032024">
    <property type="term" value="P:positive regulation of insulin secretion"/>
    <property type="evidence" value="ECO:0000315"/>
    <property type="project" value="MGI"/>
</dbReference>
<dbReference type="GO" id="GO:0032735">
    <property type="term" value="P:positive regulation of interleukin-12 production"/>
    <property type="evidence" value="ECO:0000315"/>
    <property type="project" value="BHF-UCL"/>
</dbReference>
<dbReference type="GO" id="GO:0046330">
    <property type="term" value="P:positive regulation of JNK cascade"/>
    <property type="evidence" value="ECO:0000250"/>
    <property type="project" value="BHF-UCL"/>
</dbReference>
<dbReference type="GO" id="GO:0045663">
    <property type="term" value="P:positive regulation of myoblast differentiation"/>
    <property type="evidence" value="ECO:0000314"/>
    <property type="project" value="BHF-UCL"/>
</dbReference>
<dbReference type="GO" id="GO:0099170">
    <property type="term" value="P:postsynaptic modulation of chemical synaptic transmission"/>
    <property type="evidence" value="ECO:0000314"/>
    <property type="project" value="SynGO"/>
</dbReference>
<dbReference type="GO" id="GO:1903140">
    <property type="term" value="P:regulation of establishment of endothelial barrier"/>
    <property type="evidence" value="ECO:0000315"/>
    <property type="project" value="UniProtKB"/>
</dbReference>
<dbReference type="GO" id="GO:0080154">
    <property type="term" value="P:regulation of fertilization"/>
    <property type="evidence" value="ECO:0000315"/>
    <property type="project" value="BHF-UCL"/>
</dbReference>
<dbReference type="GO" id="GO:0008277">
    <property type="term" value="P:regulation of G protein-coupled receptor signaling pathway"/>
    <property type="evidence" value="ECO:0000315"/>
    <property type="project" value="BHF-UCL"/>
</dbReference>
<dbReference type="GO" id="GO:0099178">
    <property type="term" value="P:regulation of retrograde trans-synaptic signaling by endocanabinoid"/>
    <property type="evidence" value="ECO:0000314"/>
    <property type="project" value="SynGO"/>
</dbReference>
<dbReference type="GO" id="GO:0007165">
    <property type="term" value="P:signal transduction"/>
    <property type="evidence" value="ECO:0000304"/>
    <property type="project" value="BHF-UCL"/>
</dbReference>
<dbReference type="CDD" id="cd00275">
    <property type="entry name" value="C2_PLC_like"/>
    <property type="match status" value="1"/>
</dbReference>
<dbReference type="CDD" id="cd16208">
    <property type="entry name" value="EFh_PI-PLCbeta1"/>
    <property type="match status" value="1"/>
</dbReference>
<dbReference type="CDD" id="cd13361">
    <property type="entry name" value="PH_PLC_beta"/>
    <property type="match status" value="1"/>
</dbReference>
<dbReference type="CDD" id="cd08591">
    <property type="entry name" value="PI-PLCc_beta"/>
    <property type="match status" value="1"/>
</dbReference>
<dbReference type="FunFam" id="1.10.238.10:FF:000048">
    <property type="entry name" value="1-phosphatidylinositol 4,5-bisphosphate phosphodiesterase"/>
    <property type="match status" value="1"/>
</dbReference>
<dbReference type="FunFam" id="1.20.1230.10:FF:000001">
    <property type="entry name" value="1-phosphatidylinositol 4,5-bisphosphate phosphodiesterase"/>
    <property type="match status" value="1"/>
</dbReference>
<dbReference type="FunFam" id="2.30.29.240:FF:000004">
    <property type="entry name" value="1-phosphatidylinositol 4,5-bisphosphate phosphodiesterase"/>
    <property type="match status" value="1"/>
</dbReference>
<dbReference type="FunFam" id="2.60.40.150:FF:000008">
    <property type="entry name" value="1-phosphatidylinositol 4,5-bisphosphate phosphodiesterase"/>
    <property type="match status" value="1"/>
</dbReference>
<dbReference type="FunFam" id="3.20.20.190:FF:000039">
    <property type="entry name" value="Phosphoinositide phospholipase C"/>
    <property type="match status" value="1"/>
</dbReference>
<dbReference type="Gene3D" id="2.30.29.240">
    <property type="match status" value="1"/>
</dbReference>
<dbReference type="Gene3D" id="2.60.40.150">
    <property type="entry name" value="C2 domain"/>
    <property type="match status" value="1"/>
</dbReference>
<dbReference type="Gene3D" id="1.10.238.10">
    <property type="entry name" value="EF-hand"/>
    <property type="match status" value="1"/>
</dbReference>
<dbReference type="Gene3D" id="3.20.20.190">
    <property type="entry name" value="Phosphatidylinositol (PI) phosphodiesterase"/>
    <property type="match status" value="1"/>
</dbReference>
<dbReference type="Gene3D" id="1.20.1230.10">
    <property type="entry name" value="Phospholipase C beta, distal C-terminal domain"/>
    <property type="match status" value="1"/>
</dbReference>
<dbReference type="InterPro" id="IPR000008">
    <property type="entry name" value="C2_dom"/>
</dbReference>
<dbReference type="InterPro" id="IPR035892">
    <property type="entry name" value="C2_domain_sf"/>
</dbReference>
<dbReference type="InterPro" id="IPR011992">
    <property type="entry name" value="EF-hand-dom_pair"/>
</dbReference>
<dbReference type="InterPro" id="IPR001192">
    <property type="entry name" value="PI-PLC_fam"/>
</dbReference>
<dbReference type="InterPro" id="IPR016280">
    <property type="entry name" value="PLC-beta"/>
</dbReference>
<dbReference type="InterPro" id="IPR028400">
    <property type="entry name" value="PLC-beta1_EF"/>
</dbReference>
<dbReference type="InterPro" id="IPR014815">
    <property type="entry name" value="PLC-beta_C"/>
</dbReference>
<dbReference type="InterPro" id="IPR042531">
    <property type="entry name" value="PLC-beta_C_sf"/>
</dbReference>
<dbReference type="InterPro" id="IPR037862">
    <property type="entry name" value="PLC-beta_PH"/>
</dbReference>
<dbReference type="InterPro" id="IPR017946">
    <property type="entry name" value="PLC-like_Pdiesterase_TIM-brl"/>
</dbReference>
<dbReference type="InterPro" id="IPR053945">
    <property type="entry name" value="PLCB1-4-like_EFh"/>
</dbReference>
<dbReference type="InterPro" id="IPR000909">
    <property type="entry name" value="PLipase_C_PInositol-sp_X_dom"/>
</dbReference>
<dbReference type="InterPro" id="IPR001711">
    <property type="entry name" value="PLipase_C_Pinositol-sp_Y"/>
</dbReference>
<dbReference type="PANTHER" id="PTHR10336:SF12">
    <property type="entry name" value="1-PHOSPHATIDYLINOSITOL 4,5-BISPHOSPHATE PHOSPHODIESTERASE BETA-1"/>
    <property type="match status" value="1"/>
</dbReference>
<dbReference type="PANTHER" id="PTHR10336">
    <property type="entry name" value="PHOSPHOINOSITIDE-SPECIFIC PHOSPHOLIPASE C FAMILY PROTEIN"/>
    <property type="match status" value="1"/>
</dbReference>
<dbReference type="Pfam" id="PF17787">
    <property type="entry name" value="PH_14"/>
    <property type="match status" value="1"/>
</dbReference>
<dbReference type="Pfam" id="PF00388">
    <property type="entry name" value="PI-PLC-X"/>
    <property type="match status" value="1"/>
</dbReference>
<dbReference type="Pfam" id="PF00387">
    <property type="entry name" value="PI-PLC-Y"/>
    <property type="match status" value="1"/>
</dbReference>
<dbReference type="Pfam" id="PF08703">
    <property type="entry name" value="PLC-beta_C"/>
    <property type="match status" value="1"/>
</dbReference>
<dbReference type="Pfam" id="PF22631">
    <property type="entry name" value="PLCB1-4-like_EFh"/>
    <property type="match status" value="1"/>
</dbReference>
<dbReference type="PIRSF" id="PIRSF000956">
    <property type="entry name" value="PLC-beta"/>
    <property type="match status" value="1"/>
</dbReference>
<dbReference type="PRINTS" id="PR00390">
    <property type="entry name" value="PHPHLIPASEC"/>
</dbReference>
<dbReference type="SMART" id="SM00239">
    <property type="entry name" value="C2"/>
    <property type="match status" value="1"/>
</dbReference>
<dbReference type="SMART" id="SM00148">
    <property type="entry name" value="PLCXc"/>
    <property type="match status" value="1"/>
</dbReference>
<dbReference type="SMART" id="SM00149">
    <property type="entry name" value="PLCYc"/>
    <property type="match status" value="1"/>
</dbReference>
<dbReference type="SUPFAM" id="SSF69989">
    <property type="entry name" value="C-terminal domain of PLC-beta"/>
    <property type="match status" value="1"/>
</dbReference>
<dbReference type="SUPFAM" id="SSF49562">
    <property type="entry name" value="C2 domain (Calcium/lipid-binding domain, CaLB)"/>
    <property type="match status" value="1"/>
</dbReference>
<dbReference type="SUPFAM" id="SSF47473">
    <property type="entry name" value="EF-hand"/>
    <property type="match status" value="1"/>
</dbReference>
<dbReference type="SUPFAM" id="SSF50729">
    <property type="entry name" value="PH domain-like"/>
    <property type="match status" value="1"/>
</dbReference>
<dbReference type="SUPFAM" id="SSF51695">
    <property type="entry name" value="PLC-like phosphodiesterases"/>
    <property type="match status" value="1"/>
</dbReference>
<dbReference type="PROSITE" id="PS50004">
    <property type="entry name" value="C2"/>
    <property type="match status" value="1"/>
</dbReference>
<dbReference type="PROSITE" id="PS50007">
    <property type="entry name" value="PIPLC_X_DOMAIN"/>
    <property type="match status" value="1"/>
</dbReference>
<dbReference type="PROSITE" id="PS50008">
    <property type="entry name" value="PIPLC_Y_DOMAIN"/>
    <property type="match status" value="1"/>
</dbReference>
<sequence length="1216" mass="138396">MAGAQPGVHALQLKPVCVSDSLKKGTKFVKWDDDSTIVTPIILRTDPQGFFFYWTDQNKETELLDLSLVKDARCGKHAKAPKDPKLRELLDVGNIGHLEQRMITVVYGPDLVNISHLNLVAFQEEVAKEWTNEVFSLATNLLAQNMSRDAFLEKAYTKLKLQVTPEGRIPLKNIYRLFSADRKRVETALEACSLPSSRNDSIPQEDFTPDVYRVFLNNLCPRPEIDNIFSEFGAKSKPYLTVDQMMDFINLKQRDPRLNEILYPPLKQEQVQVLIEKYEPNSSLAKKGQMSVDGFMRYLSGEENGVVSPEKLDLNEDMSQPLSHYFINSSHNTYLTAGQLAGNSSVEMYRQVLLSGCRCVELDCWKGRTAEEEPVITHGFTMTTEISFKEVIEAIAECAFKTSPFPILLSFENHVDSPKQQAKMAEYCRLIFGDALLMEPLEKYPLESGVPLPSPMDLMYKILVKNKKKSHKSSEGSGKKKLSEQASNTYSDSSSVFEPSSPGAGEADTESDDDDDDDDCKKSSMDEGTAGSEAMATEEMSNLVNYIQPVKFESFEISKKRNKSFEMSSFVETKGLEQLTKSPVEFVEYNKMQLSRIYPKGTRVDSSNYMPQLFWNAGCQMVALNFQTVDLAMQINMGMYEYNGKSGYRLKPEFMRRPDKHFDPFTEGIVDGIVANTLSVKIISGQFLSDKKVGTYVEVDMFGLPVDTRRKAFKTKTSQGNAVNPVWEEEPIVFKKVVLPSLACLRIAAYEEGGKFIGHRILPVQAIRPGYHYICLRNERNQPLTLPAVFVYIEVKDYVPDTYADVIEALSNPIRYVNLMEQRAKQLAALTLEDEEEVKKEADPGETSSEAPSETRTTPAENGVNHTASLAPKPPSQAPHSQPAPGSVKAPAKTEDLIQSVLTEVEAQTIEELKQQKSFVKLQKKHYKEMKDLVKRHHKKTTELIKEHTTKYNEIQNDYLRRRAALEKSAKKDSKKKSEPSSPDHGSSAIEQDLAALDAEMTQKLIDLKDKQQQQLLNLRQEQYYSEKYQKREHIKLLIQKLTDVAEECQNNQLKKLKEICEKEKKELKKKMDKKRQEKITEAKSKDKSQMEEEKTEMIRSYIQEVVQYIKRLEEAQSKRQEKLVEKHNEIRQQILDEKPKLQTELEQEYQDKFKRLPLEILEFVQEAMKGKISEDSNHGSAPPSLASDAAKVNLKSPSSEEIERENPGREFDTPL</sequence>
<organism>
    <name type="scientific">Mus musculus</name>
    <name type="common">Mouse</name>
    <dbReference type="NCBI Taxonomy" id="10090"/>
    <lineage>
        <taxon>Eukaryota</taxon>
        <taxon>Metazoa</taxon>
        <taxon>Chordata</taxon>
        <taxon>Craniata</taxon>
        <taxon>Vertebrata</taxon>
        <taxon>Euteleostomi</taxon>
        <taxon>Mammalia</taxon>
        <taxon>Eutheria</taxon>
        <taxon>Euarchontoglires</taxon>
        <taxon>Glires</taxon>
        <taxon>Rodentia</taxon>
        <taxon>Myomorpha</taxon>
        <taxon>Muroidea</taxon>
        <taxon>Muridae</taxon>
        <taxon>Murinae</taxon>
        <taxon>Mus</taxon>
        <taxon>Mus</taxon>
    </lineage>
</organism>
<reference key="1">
    <citation type="submission" date="1997-01" db="EMBL/GenBank/DDBJ databases">
        <title>Cloning of PI-specific phospholipase C's from 3T3 cells. Expression and membrane targeting of a novel phospholipase C-beta-1 isoform.</title>
        <authorList>
            <person name="Bai J."/>
            <person name="Wu K."/>
            <person name="Marks D.L."/>
            <person name="Machamer C."/>
            <person name="Pagano R.E."/>
        </authorList>
    </citation>
    <scope>NUCLEOTIDE SEQUENCE [MRNA] (ISOFORMS A AND B)</scope>
    <source>
        <strain>SWR/J</strain>
    </source>
</reference>
<reference key="2">
    <citation type="journal article" date="2001" name="Mamm. Genome">
        <title>High-throughput sequence identification of gene coding variants within alcohol-related QTLs.</title>
        <authorList>
            <person name="Ehringer M.A."/>
            <person name="Thompson J."/>
            <person name="Conroy O."/>
            <person name="Xu Y."/>
            <person name="Yang F."/>
            <person name="Canniff J."/>
            <person name="Beeson M."/>
            <person name="Gordon L."/>
            <person name="Bennett B."/>
            <person name="Johnson T.E."/>
            <person name="Sikela J.M."/>
        </authorList>
    </citation>
    <scope>NUCLEOTIDE SEQUENCE [MRNA] (ISOFORM C)</scope>
    <source>
        <strain>ILS</strain>
        <strain>ISS</strain>
    </source>
</reference>
<reference key="3">
    <citation type="journal article" date="2009" name="PLoS Biol.">
        <title>Lineage-specific biology revealed by a finished genome assembly of the mouse.</title>
        <authorList>
            <person name="Church D.M."/>
            <person name="Goodstadt L."/>
            <person name="Hillier L.W."/>
            <person name="Zody M.C."/>
            <person name="Goldstein S."/>
            <person name="She X."/>
            <person name="Bult C.J."/>
            <person name="Agarwala R."/>
            <person name="Cherry J.L."/>
            <person name="DiCuccio M."/>
            <person name="Hlavina W."/>
            <person name="Kapustin Y."/>
            <person name="Meric P."/>
            <person name="Maglott D."/>
            <person name="Birtle Z."/>
            <person name="Marques A.C."/>
            <person name="Graves T."/>
            <person name="Zhou S."/>
            <person name="Teague B."/>
            <person name="Potamousis K."/>
            <person name="Churas C."/>
            <person name="Place M."/>
            <person name="Herschleb J."/>
            <person name="Runnheim R."/>
            <person name="Forrest D."/>
            <person name="Amos-Landgraf J."/>
            <person name="Schwartz D.C."/>
            <person name="Cheng Z."/>
            <person name="Lindblad-Toh K."/>
            <person name="Eichler E.E."/>
            <person name="Ponting C.P."/>
        </authorList>
    </citation>
    <scope>NUCLEOTIDE SEQUENCE [LARGE SCALE GENOMIC DNA]</scope>
    <source>
        <strain>C57BL/6J</strain>
    </source>
</reference>
<reference key="4">
    <citation type="journal article" date="2004" name="Genome Res.">
        <title>The status, quality, and expansion of the NIH full-length cDNA project: the Mammalian Gene Collection (MGC).</title>
        <authorList>
            <consortium name="The MGC Project Team"/>
        </authorList>
    </citation>
    <scope>NUCLEOTIDE SEQUENCE [LARGE SCALE MRNA] (ISOFORM A)</scope>
    <source>
        <strain>C57BL/6J</strain>
        <tissue>Brain</tissue>
    </source>
</reference>
<reference key="5">
    <citation type="journal article" date="1998" name="Eur. J. Neurosci.">
        <title>Patterns of expression for the mRNA corresponding to the four isoforms of phospholipase Cbeta in mouse brain.</title>
        <authorList>
            <person name="Watanabe M."/>
            <person name="Nakamura M."/>
            <person name="Sato K."/>
            <person name="Kano M."/>
            <person name="Simon M.I."/>
            <person name="Inoue Y."/>
        </authorList>
    </citation>
    <scope>NUCLEOTIDE SEQUENCE [MRNA] OF 29-145</scope>
    <source>
        <strain>C57BL/6J</strain>
    </source>
</reference>
<reference key="6">
    <citation type="journal article" date="1996" name="Biochem. J.">
        <title>Phospholipase C in mouse oocytes: characterization of beta and gamma isoforms and their possible involvement in sperm-induced Ca2+ spiking.</title>
        <authorList>
            <person name="Dupont G."/>
            <person name="McGuinness O.M."/>
            <person name="Johnson M.H."/>
            <person name="Berridge M.J."/>
            <person name="Borgese F."/>
        </authorList>
    </citation>
    <scope>NUCLEOTIDE SEQUENCE [MRNA] OF 428-615</scope>
    <source>
        <tissue>Oocyte</tissue>
    </source>
</reference>
<reference key="7">
    <citation type="journal article" date="2008" name="Circ. Res.">
        <title>Nuclear alpha1-adrenergic receptors signal activated ERK localization to caveolae in adult cardiac myocytes.</title>
        <authorList>
            <person name="Wright C.D."/>
            <person name="Chen Q."/>
            <person name="Baye N.L."/>
            <person name="Huang Y."/>
            <person name="Healy C.L."/>
            <person name="Kasinathan S."/>
            <person name="O'Connell T.D."/>
        </authorList>
    </citation>
    <scope>SUBCELLULAR LOCATION</scope>
</reference>
<reference key="8">
    <citation type="journal article" date="2010" name="Cell">
        <title>A tissue-specific atlas of mouse protein phosphorylation and expression.</title>
        <authorList>
            <person name="Huttlin E.L."/>
            <person name="Jedrychowski M.P."/>
            <person name="Elias J.E."/>
            <person name="Goswami T."/>
            <person name="Rad R."/>
            <person name="Beausoleil S.A."/>
            <person name="Villen J."/>
            <person name="Haas W."/>
            <person name="Sowa M.E."/>
            <person name="Gygi S.P."/>
        </authorList>
    </citation>
    <scope>PHOSPHORYLATION [LARGE SCALE ANALYSIS] AT SER-236; SER-417; THR-509; SER-511; SER-582; SER-978; SER-987; SER-1197; SER-1199 AND SER-1200</scope>
    <scope>IDENTIFICATION BY MASS SPECTROMETRY [LARGE SCALE ANALYSIS]</scope>
    <source>
        <tissue>Brain</tissue>
        <tissue>Brown adipose tissue</tissue>
        <tissue>Kidney</tissue>
        <tissue>Liver</tissue>
        <tissue>Lung</tissue>
        <tissue>Pancreas</tissue>
    </source>
</reference>
<reference key="9">
    <citation type="journal article" date="2016" name="Nat. Commun.">
        <title>Palmitoyl acyltransferase DHHC21 mediates endothelial dysfunction in systemic inflammatory response syndrome.</title>
        <authorList>
            <person name="Beard R.S. Jr."/>
            <person name="Yang X."/>
            <person name="Meegan J.E."/>
            <person name="Overstreet J.W."/>
            <person name="Yang C.G."/>
            <person name="Elliott J.A."/>
            <person name="Reynolds J.J."/>
            <person name="Cha B.J."/>
            <person name="Pivetti C.D."/>
            <person name="Mitchell D.A."/>
            <person name="Wu M.H."/>
            <person name="Deschenes R.J."/>
            <person name="Yuan S.Y."/>
        </authorList>
    </citation>
    <scope>FUNCTION</scope>
    <scope>PALMITOYLATION AT CYS-17 BY ZDHHC21</scope>
</reference>
<name>PLCB1_MOUSE</name>
<protein>
    <recommendedName>
        <fullName evidence="14">1-phosphatidylinositol 4,5-bisphosphate phosphodiesterase beta-1</fullName>
        <ecNumber evidence="4">3.1.4.11</ecNumber>
    </recommendedName>
    <alternativeName>
        <fullName>PLC-154</fullName>
    </alternativeName>
    <alternativeName>
        <fullName>Phosphoinositide phospholipase C-beta-1</fullName>
    </alternativeName>
    <alternativeName>
        <fullName>Phospholipase C-beta-1</fullName>
        <shortName>PLC-beta-1</shortName>
    </alternativeName>
</protein>
<feature type="chain" id="PRO_0000088487" description="1-phosphatidylinositol 4,5-bisphosphate phosphodiesterase beta-1">
    <location>
        <begin position="1"/>
        <end position="1216"/>
    </location>
</feature>
<feature type="domain" description="PI-PLC X-box" evidence="6">
    <location>
        <begin position="316"/>
        <end position="467"/>
    </location>
</feature>
<feature type="domain" description="PI-PLC Y-box" evidence="7">
    <location>
        <begin position="540"/>
        <end position="656"/>
    </location>
</feature>
<feature type="domain" description="C2" evidence="5">
    <location>
        <begin position="656"/>
        <end position="786"/>
    </location>
</feature>
<feature type="region of interest" description="Disordered" evidence="8">
    <location>
        <begin position="469"/>
        <end position="534"/>
    </location>
</feature>
<feature type="region of interest" description="Disordered" evidence="8">
    <location>
        <begin position="834"/>
        <end position="891"/>
    </location>
</feature>
<feature type="region of interest" description="Disordered" evidence="8">
    <location>
        <begin position="967"/>
        <end position="989"/>
    </location>
</feature>
<feature type="region of interest" description="Disordered" evidence="8">
    <location>
        <begin position="1072"/>
        <end position="1095"/>
    </location>
</feature>
<feature type="region of interest" description="Disordered" evidence="8">
    <location>
        <begin position="1173"/>
        <end position="1216"/>
    </location>
</feature>
<feature type="compositionally biased region" description="Basic and acidic residues" evidence="8">
    <location>
        <begin position="472"/>
        <end position="483"/>
    </location>
</feature>
<feature type="compositionally biased region" description="Low complexity" evidence="8">
    <location>
        <begin position="491"/>
        <end position="501"/>
    </location>
</feature>
<feature type="compositionally biased region" description="Acidic residues" evidence="8">
    <location>
        <begin position="507"/>
        <end position="518"/>
    </location>
</feature>
<feature type="compositionally biased region" description="Polar residues" evidence="8">
    <location>
        <begin position="846"/>
        <end position="868"/>
    </location>
</feature>
<feature type="compositionally biased region" description="Basic and acidic residues" evidence="8">
    <location>
        <begin position="967"/>
        <end position="979"/>
    </location>
</feature>
<feature type="compositionally biased region" description="Basic and acidic residues" evidence="8">
    <location>
        <begin position="1075"/>
        <end position="1095"/>
    </location>
</feature>
<feature type="compositionally biased region" description="Basic and acidic residues" evidence="8">
    <location>
        <begin position="1205"/>
        <end position="1216"/>
    </location>
</feature>
<feature type="active site" evidence="6">
    <location>
        <position position="331"/>
    </location>
</feature>
<feature type="active site" evidence="6">
    <location>
        <position position="378"/>
    </location>
</feature>
<feature type="modified residue" description="Phosphoserine" evidence="17">
    <location>
        <position position="236"/>
    </location>
</feature>
<feature type="modified residue" description="Phosphoserine" evidence="17">
    <location>
        <position position="417"/>
    </location>
</feature>
<feature type="modified residue" description="Phosphothreonine" evidence="17">
    <location>
        <position position="509"/>
    </location>
</feature>
<feature type="modified residue" description="Phosphoserine" evidence="17">
    <location>
        <position position="511"/>
    </location>
</feature>
<feature type="modified residue" description="Phosphoserine" evidence="17">
    <location>
        <position position="582"/>
    </location>
</feature>
<feature type="modified residue" description="Phosphoserine; by PKC" evidence="3">
    <location>
        <position position="887"/>
    </location>
</feature>
<feature type="modified residue" description="Phosphoserine" evidence="17">
    <location>
        <position position="978"/>
    </location>
</feature>
<feature type="modified residue" description="Phosphoserine" evidence="17">
    <location>
        <position position="987"/>
    </location>
</feature>
<feature type="modified residue" description="Phosphoserine" evidence="17">
    <location>
        <position position="1197"/>
    </location>
</feature>
<feature type="modified residue" description="Phosphoserine" evidence="17">
    <location>
        <position position="1199"/>
    </location>
</feature>
<feature type="modified residue" description="Phosphoserine" evidence="17">
    <location>
        <position position="1200"/>
    </location>
</feature>
<feature type="lipid moiety-binding region" description="S-palmitoyl cysteine" evidence="10">
    <location>
        <position position="17"/>
    </location>
</feature>
<feature type="splice variant" id="VSP_008917" description="In isoform B." evidence="13">
    <original>LQTELEQEYQDKFKRLPLEILEFVQEAMKGKISEDSNHGSAPPSLASDAAKVNLKSPSSEEIERENPGREFDTPL</original>
    <variation>GEGPSSVLSEGCHEDPSVPPNFTPPNPQALKW</variation>
    <location>
        <begin position="1142"/>
        <end position="1216"/>
    </location>
</feature>
<feature type="splice variant" id="VSP_008918" description="In isoform C." evidence="11">
    <location>
        <begin position="1199"/>
        <end position="1216"/>
    </location>
</feature>
<feature type="sequence conflict" description="In Ref. 1; AAD00571/AAD00572/AAD00573." evidence="14" ref="1">
    <original>F</original>
    <variation>L</variation>
    <location>
        <position position="28"/>
    </location>
</feature>
<feature type="sequence conflict" description="In Ref. 1; AAD00571/AAD00572/AAD00573." evidence="14" ref="1">
    <original>I</original>
    <variation>T</variation>
    <location>
        <position position="41"/>
    </location>
</feature>
<feature type="sequence conflict" description="In Ref. 5; AAD01749." evidence="14" ref="5">
    <original>S</original>
    <variation>T</variation>
    <location>
        <position position="67"/>
    </location>
</feature>
<feature type="sequence conflict" description="In Ref. 1; AAD00571/AAD00572/AAD00573." evidence="14" ref="1">
    <original>K</original>
    <variation>E</variation>
    <location>
        <position position="79"/>
    </location>
</feature>
<feature type="sequence conflict" description="In Ref. 1; AAD00571/AAD00572/AAD00573." evidence="14" ref="1">
    <original>V</original>
    <variation>A</variation>
    <location>
        <position position="112"/>
    </location>
</feature>
<feature type="sequence conflict" description="In Ref. 6; CAA64637." evidence="14" ref="6">
    <original>R</original>
    <variation>I</variation>
    <location>
        <position position="561"/>
    </location>
</feature>
<feature type="sequence conflict" description="In Ref. 6; CAA64637." evidence="14" ref="6">
    <original>L</original>
    <variation>I</variation>
    <location>
        <position position="613"/>
    </location>
</feature>
<feature type="sequence conflict" description="In Ref. 1; AAD00571/AAD00572/AAD00573." evidence="14" ref="1">
    <original>V</original>
    <variation>M</variation>
    <location>
        <position position="622"/>
    </location>
</feature>
<feature type="sequence conflict" description="In Ref. 1; AAD00571/AAD00572/AAD00573." evidence="14" ref="1">
    <original>K</original>
    <variation>T</variation>
    <location>
        <position position="714"/>
    </location>
</feature>
<feature type="sequence conflict" description="In Ref. 1; AAD00571/AAD00572/AAD00573." evidence="14" ref="1">
    <original>V</original>
    <variation>D</variation>
    <location>
        <position position="795"/>
    </location>
</feature>
<feature type="sequence conflict" description="In Ref. 1; AAD00571/AAD00572/AAD00573." evidence="14" ref="1">
    <original>Q</original>
    <variation>H</variation>
    <location>
        <position position="923"/>
    </location>
</feature>
<feature type="sequence conflict" description="In Ref. 1; AAD00571/AAD00572/AAD00573." evidence="14" ref="1">
    <original>N</original>
    <variation>I</variation>
    <location>
        <position position="957"/>
    </location>
</feature>
<feature type="sequence conflict" description="In Ref. 1; AAD00571/AAD00572/AAD00573." evidence="14" ref="1">
    <original>K</original>
    <variation>T</variation>
    <location>
        <position position="1084"/>
    </location>
</feature>
<gene>
    <name evidence="16" type="primary">Plcb1</name>
    <name type="synonym">Plcb</name>
</gene>
<proteinExistence type="evidence at protein level"/>
<evidence type="ECO:0000250" key="1"/>
<evidence type="ECO:0000250" key="2">
    <source>
        <dbReference type="UniProtKB" id="P10687"/>
    </source>
</evidence>
<evidence type="ECO:0000250" key="3">
    <source>
        <dbReference type="UniProtKB" id="P10894"/>
    </source>
</evidence>
<evidence type="ECO:0000250" key="4">
    <source>
        <dbReference type="UniProtKB" id="Q9NQ66"/>
    </source>
</evidence>
<evidence type="ECO:0000255" key="5">
    <source>
        <dbReference type="PROSITE-ProRule" id="PRU00041"/>
    </source>
</evidence>
<evidence type="ECO:0000255" key="6">
    <source>
        <dbReference type="PROSITE-ProRule" id="PRU00270"/>
    </source>
</evidence>
<evidence type="ECO:0000255" key="7">
    <source>
        <dbReference type="PROSITE-ProRule" id="PRU00271"/>
    </source>
</evidence>
<evidence type="ECO:0000256" key="8">
    <source>
        <dbReference type="SAM" id="MobiDB-lite"/>
    </source>
</evidence>
<evidence type="ECO:0000269" key="9">
    <source>
    </source>
</evidence>
<evidence type="ECO:0000269" key="10">
    <source>
    </source>
</evidence>
<evidence type="ECO:0000303" key="11">
    <source>
    </source>
</evidence>
<evidence type="ECO:0000303" key="12">
    <source>
    </source>
</evidence>
<evidence type="ECO:0000303" key="13">
    <source ref="1"/>
</evidence>
<evidence type="ECO:0000305" key="14"/>
<evidence type="ECO:0000305" key="15">
    <source>
    </source>
</evidence>
<evidence type="ECO:0000312" key="16">
    <source>
        <dbReference type="MGI" id="MGI:97613"/>
    </source>
</evidence>
<evidence type="ECO:0007744" key="17">
    <source>
    </source>
</evidence>
<comment type="function">
    <text evidence="10 12">Catalyzes the hydrolysis of 1-phosphatidylinositol 4,5-bisphosphate into diacylglycerol (DAG) and inositol 1,4,5-trisphosphate (IP3) and mediates intracellular signaling downstream of G protein-coupled receptors (PubMed:27653213). Regulates the function of the endothelial barrier (PubMed:27653213).</text>
</comment>
<comment type="catalytic activity">
    <reaction evidence="4">
        <text>a 1,2-diacyl-sn-glycero-3-phospho-(1D-myo-inositol-4,5-bisphosphate) + H2O = 1D-myo-inositol 1,4,5-trisphosphate + a 1,2-diacyl-sn-glycerol + H(+)</text>
        <dbReference type="Rhea" id="RHEA:33179"/>
        <dbReference type="ChEBI" id="CHEBI:15377"/>
        <dbReference type="ChEBI" id="CHEBI:15378"/>
        <dbReference type="ChEBI" id="CHEBI:17815"/>
        <dbReference type="ChEBI" id="CHEBI:58456"/>
        <dbReference type="ChEBI" id="CHEBI:203600"/>
        <dbReference type="EC" id="3.1.4.11"/>
    </reaction>
    <physiologicalReaction direction="left-to-right" evidence="4">
        <dbReference type="Rhea" id="RHEA:33180"/>
    </physiologicalReaction>
</comment>
<comment type="catalytic activity">
    <reaction evidence="2">
        <text>a 1,2-diacyl-sn-glycero-3-phospho-(1D-myo-inositol) + H2O = 1D-myo-inositol 1-phosphate + a 1,2-diacyl-sn-glycerol + H(+)</text>
        <dbReference type="Rhea" id="RHEA:43484"/>
        <dbReference type="ChEBI" id="CHEBI:15377"/>
        <dbReference type="ChEBI" id="CHEBI:15378"/>
        <dbReference type="ChEBI" id="CHEBI:17815"/>
        <dbReference type="ChEBI" id="CHEBI:57880"/>
        <dbReference type="ChEBI" id="CHEBI:58433"/>
    </reaction>
    <physiologicalReaction direction="left-to-right" evidence="2">
        <dbReference type="Rhea" id="RHEA:43485"/>
    </physiologicalReaction>
</comment>
<comment type="cofactor">
    <cofactor evidence="1">
        <name>Ca(2+)</name>
        <dbReference type="ChEBI" id="CHEBI:29108"/>
    </cofactor>
</comment>
<comment type="subunit">
    <text evidence="4">Interacts with DGKQ.</text>
</comment>
<comment type="subcellular location">
    <subcellularLocation>
        <location evidence="9">Nucleus membrane</location>
    </subcellularLocation>
    <subcellularLocation>
        <location evidence="2">Cytoplasm</location>
    </subcellularLocation>
    <text evidence="9">Colocalizes with the adrenergic receptors, ADREN1A and ADREN1B, at the nuclear membrane of cardiac myocytes.</text>
</comment>
<comment type="alternative products">
    <event type="alternative splicing"/>
    <isoform>
        <id>Q9Z1B3-1</id>
        <name>A</name>
        <name>C-beta-1a</name>
        <sequence type="displayed"/>
    </isoform>
    <isoform>
        <id>Q9Z1B3-2</id>
        <name>B</name>
        <name>C-beta-1b</name>
        <sequence type="described" ref="VSP_008917"/>
    </isoform>
    <isoform>
        <id>Q9Z1B3-3</id>
        <name>C</name>
        <sequence type="described" ref="VSP_008918"/>
    </isoform>
</comment>
<comment type="PTM">
    <text evidence="10 15">Palmitoylated (PubMed:27653213). Palmitoylation at Cys-17 by ZDHHC21 regulates the signaling activity of PLCB1 and the function of the endothelial barrier (Probable). Palmitoylation by ZDHHC21 is stimulated by inflammation (PubMed:27653213).</text>
</comment>
<comment type="miscellaneous">
    <text>The receptor-mediated activation of PLC-beta-1 is mediated by two G-protein alpha subunits, alpha-Q and alpha-11.</text>
</comment>
<keyword id="KW-0025">Alternative splicing</keyword>
<keyword id="KW-0106">Calcium</keyword>
<keyword id="KW-0963">Cytoplasm</keyword>
<keyword id="KW-0378">Hydrolase</keyword>
<keyword id="KW-0442">Lipid degradation</keyword>
<keyword id="KW-0443">Lipid metabolism</keyword>
<keyword id="KW-0449">Lipoprotein</keyword>
<keyword id="KW-0472">Membrane</keyword>
<keyword id="KW-0539">Nucleus</keyword>
<keyword id="KW-0564">Palmitate</keyword>
<keyword id="KW-0597">Phosphoprotein</keyword>
<keyword id="KW-1185">Reference proteome</keyword>
<keyword id="KW-0807">Transducer</keyword>
<accession>Q9Z1B3</accession>
<accession>Q62075</accession>
<accession>Q6PDH1</accession>
<accession>Q8K5A5</accession>
<accession>Q8K5A6</accession>
<accession>Q9Z0E5</accession>
<accession>Q9Z2T5</accession>